<dbReference type="EMBL" id="CP001196">
    <property type="protein sequence ID" value="ACI91535.1"/>
    <property type="molecule type" value="Genomic_DNA"/>
</dbReference>
<dbReference type="EMBL" id="CP002826">
    <property type="protein sequence ID" value="AEI04874.1"/>
    <property type="molecule type" value="Genomic_DNA"/>
</dbReference>
<dbReference type="RefSeq" id="WP_012561566.1">
    <property type="nucleotide sequence ID" value="NC_015684.1"/>
</dbReference>
<dbReference type="SMR" id="B6JAL0"/>
<dbReference type="STRING" id="504832.OCA5_c01420"/>
<dbReference type="KEGG" id="oca:OCAR_4389"/>
<dbReference type="KEGG" id="ocg:OCA5_c01420"/>
<dbReference type="PATRIC" id="fig|504832.7.peg.149"/>
<dbReference type="eggNOG" id="COG1952">
    <property type="taxonomic scope" value="Bacteria"/>
</dbReference>
<dbReference type="HOGENOM" id="CLU_111574_0_0_5"/>
<dbReference type="OrthoDB" id="9795145at2"/>
<dbReference type="Proteomes" id="UP000007730">
    <property type="component" value="Chromosome"/>
</dbReference>
<dbReference type="GO" id="GO:0005737">
    <property type="term" value="C:cytoplasm"/>
    <property type="evidence" value="ECO:0007669"/>
    <property type="project" value="UniProtKB-SubCell"/>
</dbReference>
<dbReference type="GO" id="GO:0051082">
    <property type="term" value="F:unfolded protein binding"/>
    <property type="evidence" value="ECO:0007669"/>
    <property type="project" value="InterPro"/>
</dbReference>
<dbReference type="GO" id="GO:0006457">
    <property type="term" value="P:protein folding"/>
    <property type="evidence" value="ECO:0007669"/>
    <property type="project" value="UniProtKB-UniRule"/>
</dbReference>
<dbReference type="GO" id="GO:0051262">
    <property type="term" value="P:protein tetramerization"/>
    <property type="evidence" value="ECO:0007669"/>
    <property type="project" value="InterPro"/>
</dbReference>
<dbReference type="GO" id="GO:0015031">
    <property type="term" value="P:protein transport"/>
    <property type="evidence" value="ECO:0007669"/>
    <property type="project" value="UniProtKB-UniRule"/>
</dbReference>
<dbReference type="Gene3D" id="3.10.420.10">
    <property type="entry name" value="SecB-like"/>
    <property type="match status" value="1"/>
</dbReference>
<dbReference type="HAMAP" id="MF_00821">
    <property type="entry name" value="SecB"/>
    <property type="match status" value="1"/>
</dbReference>
<dbReference type="InterPro" id="IPR003708">
    <property type="entry name" value="SecB"/>
</dbReference>
<dbReference type="InterPro" id="IPR035958">
    <property type="entry name" value="SecB-like_sf"/>
</dbReference>
<dbReference type="NCBIfam" id="NF004392">
    <property type="entry name" value="PRK05751.1-3"/>
    <property type="match status" value="1"/>
</dbReference>
<dbReference type="NCBIfam" id="TIGR00809">
    <property type="entry name" value="secB"/>
    <property type="match status" value="1"/>
</dbReference>
<dbReference type="PANTHER" id="PTHR36918">
    <property type="match status" value="1"/>
</dbReference>
<dbReference type="PANTHER" id="PTHR36918:SF1">
    <property type="entry name" value="PROTEIN-EXPORT PROTEIN SECB"/>
    <property type="match status" value="1"/>
</dbReference>
<dbReference type="Pfam" id="PF02556">
    <property type="entry name" value="SecB"/>
    <property type="match status" value="1"/>
</dbReference>
<dbReference type="PRINTS" id="PR01594">
    <property type="entry name" value="SECBCHAPRONE"/>
</dbReference>
<dbReference type="SUPFAM" id="SSF54611">
    <property type="entry name" value="SecB-like"/>
    <property type="match status" value="1"/>
</dbReference>
<sequence length="161" mass="17509">MTDTTAASAEAAAPPQLGILTQYIKDLSFENPNAPASLSQQGKQPDITIQINVGATNLGGTDFEVMLAIEGKAMAEDKVLFALELAYAGVFRIENVPQDSLHPFVMIECPRLLFPFAREIVASATRNGGFPPLMLDPVDFVGLYRQNMARQAEQQQQSKPN</sequence>
<gene>
    <name evidence="1" type="primary">secB</name>
    <name type="ordered locus">OCAR_4389</name>
    <name type="ordered locus">OCA5_c01420</name>
</gene>
<keyword id="KW-0143">Chaperone</keyword>
<keyword id="KW-0963">Cytoplasm</keyword>
<keyword id="KW-0653">Protein transport</keyword>
<keyword id="KW-1185">Reference proteome</keyword>
<keyword id="KW-0811">Translocation</keyword>
<keyword id="KW-0813">Transport</keyword>
<reference key="1">
    <citation type="journal article" date="2008" name="J. Bacteriol.">
        <title>Genome sequence of the chemolithoautotrophic bacterium Oligotropha carboxidovorans OM5T.</title>
        <authorList>
            <person name="Paul D."/>
            <person name="Bridges S."/>
            <person name="Burgess S.C."/>
            <person name="Dandass Y."/>
            <person name="Lawrence M.L."/>
        </authorList>
    </citation>
    <scope>NUCLEOTIDE SEQUENCE [LARGE SCALE GENOMIC DNA]</scope>
    <source>
        <strain>ATCC 49405 / DSM 1227 / KCTC 32145 / OM5</strain>
    </source>
</reference>
<reference key="2">
    <citation type="journal article" date="2011" name="J. Bacteriol.">
        <title>Complete genome sequences of the chemolithoautotrophic Oligotropha carboxidovorans strains OM4 and OM5.</title>
        <authorList>
            <person name="Volland S."/>
            <person name="Rachinger M."/>
            <person name="Strittmatter A."/>
            <person name="Daniel R."/>
            <person name="Gottschalk G."/>
            <person name="Meyer O."/>
        </authorList>
    </citation>
    <scope>NUCLEOTIDE SEQUENCE [LARGE SCALE GENOMIC DNA]</scope>
    <source>
        <strain>ATCC 49405 / DSM 1227 / KCTC 32145 / OM5</strain>
    </source>
</reference>
<organism>
    <name type="scientific">Afipia carboxidovorans (strain ATCC 49405 / DSM 1227 / KCTC 32145 / OM5)</name>
    <name type="common">Oligotropha carboxidovorans</name>
    <dbReference type="NCBI Taxonomy" id="504832"/>
    <lineage>
        <taxon>Bacteria</taxon>
        <taxon>Pseudomonadati</taxon>
        <taxon>Pseudomonadota</taxon>
        <taxon>Alphaproteobacteria</taxon>
        <taxon>Hyphomicrobiales</taxon>
        <taxon>Nitrobacteraceae</taxon>
        <taxon>Afipia</taxon>
    </lineage>
</organism>
<feature type="chain" id="PRO_1000195328" description="Protein-export protein SecB">
    <location>
        <begin position="1"/>
        <end position="161"/>
    </location>
</feature>
<name>SECB_AFIC5</name>
<proteinExistence type="inferred from homology"/>
<evidence type="ECO:0000255" key="1">
    <source>
        <dbReference type="HAMAP-Rule" id="MF_00821"/>
    </source>
</evidence>
<comment type="function">
    <text evidence="1">One of the proteins required for the normal export of preproteins out of the cell cytoplasm. It is a molecular chaperone that binds to a subset of precursor proteins, maintaining them in a translocation-competent state. It also specifically binds to its receptor SecA.</text>
</comment>
<comment type="subunit">
    <text evidence="1">Homotetramer, a dimer of dimers. One homotetramer interacts with 1 SecA dimer.</text>
</comment>
<comment type="subcellular location">
    <subcellularLocation>
        <location evidence="1">Cytoplasm</location>
    </subcellularLocation>
</comment>
<comment type="similarity">
    <text evidence="1">Belongs to the SecB family.</text>
</comment>
<accession>B6JAL0</accession>
<accession>F8BRH0</accession>
<protein>
    <recommendedName>
        <fullName evidence="1">Protein-export protein SecB</fullName>
    </recommendedName>
</protein>